<comment type="function">
    <text>May play a role in neural plasticity. May be involved during axon regeneration.</text>
</comment>
<comment type="subunit">
    <text evidence="1">Forms disulfide-linked dimers.</text>
</comment>
<comment type="subcellular location">
    <subcellularLocation>
        <location>Secreted</location>
    </subcellularLocation>
</comment>
<comment type="tissue specificity">
    <text>EPDs are synthesized in the meninx and secreted in the cerebrospinal fluid.</text>
</comment>
<comment type="PTM">
    <text>Binds calcium through the terminal sialic acids.</text>
</comment>
<comment type="similarity">
    <text evidence="3">Belongs to the ependymin family.</text>
</comment>
<keyword id="KW-0106">Calcium</keyword>
<keyword id="KW-1015">Disulfide bond</keyword>
<keyword id="KW-0325">Glycoprotein</keyword>
<keyword id="KW-1185">Reference proteome</keyword>
<keyword id="KW-0964">Secreted</keyword>
<keyword id="KW-0732">Signal</keyword>
<reference key="1">
    <citation type="journal article" date="1993" name="J. Mol. Evol.">
        <title>Molecular analysis of ependymins from the cerebrospinal fluid of the orders Clupeiformes and Salmoniformes: no indication for the existence of an euteleost infradivision.</title>
        <authorList>
            <person name="Mueller-Schmid A."/>
            <person name="Ganss B."/>
            <person name="Gorr T."/>
            <person name="Hoffmann W."/>
        </authorList>
    </citation>
    <scope>NUCLEOTIDE SEQUENCE [MRNA]</scope>
    <source>
        <tissue>Brain</tissue>
    </source>
</reference>
<proteinExistence type="evidence at transcript level"/>
<protein>
    <recommendedName>
        <fullName>Ependymin</fullName>
        <shortName>EPD</shortName>
    </recommendedName>
</protein>
<feature type="signal peptide" evidence="1">
    <location>
        <begin position="1"/>
        <end position="21"/>
    </location>
</feature>
<feature type="chain" id="PRO_0000008346" description="Ependymin">
    <location>
        <begin position="22"/>
        <end position="221"/>
    </location>
</feature>
<feature type="glycosylation site" description="N-linked (GlcNAc...) asparagine" evidence="2">
    <location>
        <position position="37"/>
    </location>
</feature>
<feature type="glycosylation site" description="N-linked (GlcNAc...) asparagine" evidence="2">
    <location>
        <position position="77"/>
    </location>
</feature>
<feature type="glycosylation site" description="N-linked (GlcNAc...) asparagine" evidence="2">
    <location>
        <position position="101"/>
    </location>
</feature>
<name>EPD_ESOLU</name>
<dbReference type="EMBL" id="L09066">
    <property type="protein sequence ID" value="AAA49253.1"/>
    <property type="molecule type" value="mRNA"/>
</dbReference>
<dbReference type="PIR" id="I50538">
    <property type="entry name" value="I50538"/>
</dbReference>
<dbReference type="RefSeq" id="NP_001297938.1">
    <property type="nucleotide sequence ID" value="NM_001311009.1"/>
</dbReference>
<dbReference type="SMR" id="P32188"/>
<dbReference type="FunCoup" id="P32188">
    <property type="interactions" value="2"/>
</dbReference>
<dbReference type="GlyCosmos" id="P32188">
    <property type="glycosylation" value="3 sites, No reported glycans"/>
</dbReference>
<dbReference type="GeneID" id="105025994"/>
<dbReference type="KEGG" id="els:105025994"/>
<dbReference type="CTD" id="30199"/>
<dbReference type="InParanoid" id="P32188"/>
<dbReference type="OrthoDB" id="8872894at2759"/>
<dbReference type="Proteomes" id="UP000265140">
    <property type="component" value="Unassembled WGS sequence"/>
</dbReference>
<dbReference type="GO" id="GO:0005576">
    <property type="term" value="C:extracellular region"/>
    <property type="evidence" value="ECO:0007669"/>
    <property type="project" value="UniProtKB-SubCell"/>
</dbReference>
<dbReference type="GO" id="GO:0005764">
    <property type="term" value="C:lysosome"/>
    <property type="evidence" value="ECO:0007669"/>
    <property type="project" value="TreeGrafter"/>
</dbReference>
<dbReference type="GO" id="GO:0005509">
    <property type="term" value="F:calcium ion binding"/>
    <property type="evidence" value="ECO:0007669"/>
    <property type="project" value="InterPro"/>
</dbReference>
<dbReference type="GO" id="GO:0007160">
    <property type="term" value="P:cell-matrix adhesion"/>
    <property type="evidence" value="ECO:0007669"/>
    <property type="project" value="InterPro"/>
</dbReference>
<dbReference type="InterPro" id="IPR001299">
    <property type="entry name" value="Ependymin"/>
</dbReference>
<dbReference type="InterPro" id="IPR018224">
    <property type="entry name" value="Ependymin_CS"/>
</dbReference>
<dbReference type="PANTHER" id="PTHR10697:SF5">
    <property type="entry name" value="EPENDYMIN-RELATED"/>
    <property type="match status" value="1"/>
</dbReference>
<dbReference type="PANTHER" id="PTHR10697">
    <property type="entry name" value="MAMMALIAN EPENDYMIN-RELATED PROTEIN 1"/>
    <property type="match status" value="1"/>
</dbReference>
<dbReference type="Pfam" id="PF00811">
    <property type="entry name" value="Ependymin"/>
    <property type="match status" value="1"/>
</dbReference>
<dbReference type="PRINTS" id="PR00317">
    <property type="entry name" value="EPENDYMIN"/>
</dbReference>
<dbReference type="SMART" id="SM00026">
    <property type="entry name" value="EPEND"/>
    <property type="match status" value="1"/>
</dbReference>
<dbReference type="PROSITE" id="PS00898">
    <property type="entry name" value="EPENDYMIN_1"/>
    <property type="match status" value="1"/>
</dbReference>
<dbReference type="PROSITE" id="PS00899">
    <property type="entry name" value="EPENDYMIN_2"/>
    <property type="match status" value="1"/>
</dbReference>
<sequence length="221" mass="24480">MQAFAVAALSIWLCLGATTLAESLAQSHGPQHCTSPNMTGVLTVMALNGGEIKATGHYHYDTTDKKLRFTESDMHLNKSEHLEDYLMLFEEGVFYDIDLKNQSCRKMSLQSHAHALELPAGAVHQVELFLGSDTVQEENIKVNIWMGSVPETKGQYSVSTTVGDCLPLSTFYSTDSITLLFSNSQVVTEVKEPEVFSLPSFCEGLELEDTHNDFFSIFNTV</sequence>
<organism>
    <name type="scientific">Esox lucius</name>
    <name type="common">Northern pike</name>
    <dbReference type="NCBI Taxonomy" id="8010"/>
    <lineage>
        <taxon>Eukaryota</taxon>
        <taxon>Metazoa</taxon>
        <taxon>Chordata</taxon>
        <taxon>Craniata</taxon>
        <taxon>Vertebrata</taxon>
        <taxon>Euteleostomi</taxon>
        <taxon>Actinopterygii</taxon>
        <taxon>Neopterygii</taxon>
        <taxon>Teleostei</taxon>
        <taxon>Protacanthopterygii</taxon>
        <taxon>Esociformes</taxon>
        <taxon>Esocidae</taxon>
        <taxon>Esox</taxon>
    </lineage>
</organism>
<accession>P32188</accession>
<gene>
    <name type="primary">epd</name>
</gene>
<evidence type="ECO:0000250" key="1"/>
<evidence type="ECO:0000255" key="2"/>
<evidence type="ECO:0000305" key="3"/>